<accession>Q9N0A4</accession>
<accession>Q5DI73</accession>
<organism>
    <name type="scientific">Macaca fascicularis</name>
    <name type="common">Crab-eating macaque</name>
    <name type="synonym">Cynomolgus monkey</name>
    <dbReference type="NCBI Taxonomy" id="9541"/>
    <lineage>
        <taxon>Eukaryota</taxon>
        <taxon>Metazoa</taxon>
        <taxon>Chordata</taxon>
        <taxon>Craniata</taxon>
        <taxon>Vertebrata</taxon>
        <taxon>Euteleostomi</taxon>
        <taxon>Mammalia</taxon>
        <taxon>Eutheria</taxon>
        <taxon>Euarchontoglires</taxon>
        <taxon>Primates</taxon>
        <taxon>Haplorrhini</taxon>
        <taxon>Catarrhini</taxon>
        <taxon>Cercopithecidae</taxon>
        <taxon>Cercopithecinae</taxon>
        <taxon>Macaca</taxon>
    </lineage>
</organism>
<comment type="function">
    <text evidence="7 10">Isomerase that catalyzes the conversion of PGH2 into the more stable prostaglandin E2 (PGE2) (in vitro) (PubMed:11866447, PubMed:23426368). The biological function and the GSH-dependent property of PTGES2 is still under debate (PubMed:23426368). In vivo, PTGES2 could form a complex with GSH and heme and would not participate in PGE2 synthesis but would catalyze the degradation of prostaglandin E2 H2 (PGH2) to 12(S)-hydroxy-5(Z),8(E),10(E)-heptadecatrienoic acid (HHT) and malondialdehyde (MDA) (PubMed:23426368).</text>
</comment>
<comment type="catalytic activity">
    <reaction evidence="7 10">
        <text>prostaglandin H2 = prostaglandin E2</text>
        <dbReference type="Rhea" id="RHEA:12893"/>
        <dbReference type="ChEBI" id="CHEBI:57405"/>
        <dbReference type="ChEBI" id="CHEBI:606564"/>
        <dbReference type="EC" id="5.3.99.3"/>
    </reaction>
    <physiologicalReaction direction="left-to-right" evidence="12">
        <dbReference type="Rhea" id="RHEA:12894"/>
    </physiologicalReaction>
</comment>
<comment type="catalytic activity">
    <reaction evidence="10">
        <text>prostaglandin H2 = (12S)-hydroxy-(5Z,8E,10E)-heptadecatrienoate + malonaldehyde</text>
        <dbReference type="Rhea" id="RHEA:48644"/>
        <dbReference type="ChEBI" id="CHEBI:57405"/>
        <dbReference type="ChEBI" id="CHEBI:90694"/>
        <dbReference type="ChEBI" id="CHEBI:566274"/>
    </reaction>
    <physiologicalReaction direction="left-to-right" evidence="12">
        <dbReference type="Rhea" id="RHEA:48645"/>
    </physiologicalReaction>
</comment>
<comment type="activity regulation">
    <text evidence="7">Isomerase activity is increased by sulfhydril compounds. Dithiothreitol (DTT) is most effective, followed by glutathione (GSH) and 2-mercaptoethanol.</text>
</comment>
<comment type="biophysicochemical properties">
    <kinetics>
        <KM evidence="7">28 uM for PGH2</KM>
    </kinetics>
</comment>
<comment type="pathway">
    <text evidence="7">Lipid metabolism; prostaglandin biosynthesis.</text>
</comment>
<comment type="subunit">
    <text evidence="4 8">Homodimer (PubMed:15854652). May interact with CEBPB. Interacts with EXOSC10 (By similarity).</text>
</comment>
<comment type="subcellular location">
    <subcellularLocation>
        <location evidence="4">Golgi apparatus membrane</location>
        <topology evidence="4">Single-pass membrane protein</topology>
    </subcellularLocation>
</comment>
<comment type="subcellular location">
    <molecule>Prostaglandin E synthase 2 truncated form</molecule>
    <subcellularLocation>
        <location evidence="4">Cytoplasm</location>
        <location evidence="4">Perinuclear region</location>
    </subcellularLocation>
    <text evidence="4">Synthesized as a Golgi membrane-bound protein, which is further cleaved into the predominant soluble truncated form. The truncated form is cytoplasmic and is enriched in the perinuclear region.</text>
</comment>
<comment type="PTM">
    <text evidence="4">Synthesized as a Golgi membrane-associated protein, and the proteolytic removal of the N-terminal hydrophobic domain leads to the formation of a mature cytosolic enzyme.</text>
</comment>
<comment type="similarity">
    <text evidence="11">Belongs to the GST superfamily.</text>
</comment>
<comment type="caution">
    <text evidence="3 4 10 11">It is not known if heme and GST are required for prostaglandin synthase activity. The protein copurifies with heme and GST when DTT is omitted during the purification procedure. The GSH-heme complex-bound enzyme has been proposed to act as a lyase and catalyze the degradation of prostaglandin E2 H2 (PGH2) to 12(S)-hydroxy-5(Z),8(E),10(E)-heptadecatrienoic acid (HHT) and malondialdehyde (MDA) (By similarity). Boiling the enzyme leads to loss of prostaglandin synthase activity, but does not eliminate the lyase activity. Besides, free heme can catalyze the formation of 12L-hydroxy-5,8,10-heptadecatrienoic acid (HHT) (By similarity). A more recent study demonstrates the GSH-dependent property of PTGES2, DTT dissociates the bound heme to produce active PGE2 synthase in vitro (PubMed:23426368). PTGES2 can only catalyzes PGE2 synthesis in the free state as an enzyme, while in vivo it forms a complex with heme and does not participate in PGE2 synthesis (PubMed:23426368). In agreement with this study, the in vivo evidence from PTGES2 deficient mice do not show that this protein is responsible for the PGE2 production under basal or pathophysiological conditions (By similarity).</text>
</comment>
<gene>
    <name type="primary">PTGES2</name>
    <name type="synonym">PGES2</name>
    <name type="ORF">QccE-11222</name>
</gene>
<evidence type="ECO:0000250" key="1"/>
<evidence type="ECO:0000250" key="2">
    <source>
        <dbReference type="UniProtKB" id="Q66LN0"/>
    </source>
</evidence>
<evidence type="ECO:0000250" key="3">
    <source>
        <dbReference type="UniProtKB" id="Q8BWM0"/>
    </source>
</evidence>
<evidence type="ECO:0000250" key="4">
    <source>
        <dbReference type="UniProtKB" id="Q9H7Z7"/>
    </source>
</evidence>
<evidence type="ECO:0000255" key="5"/>
<evidence type="ECO:0000255" key="6">
    <source>
        <dbReference type="PROSITE-ProRule" id="PRU00686"/>
    </source>
</evidence>
<evidence type="ECO:0000269" key="7">
    <source>
    </source>
</evidence>
<evidence type="ECO:0000269" key="8">
    <source>
    </source>
</evidence>
<evidence type="ECO:0000269" key="9">
    <source>
    </source>
</evidence>
<evidence type="ECO:0000269" key="10">
    <source>
    </source>
</evidence>
<evidence type="ECO:0000305" key="11"/>
<evidence type="ECO:0000305" key="12">
    <source>
    </source>
</evidence>
<evidence type="ECO:0007829" key="13">
    <source>
        <dbReference type="PDB" id="1Z9H"/>
    </source>
</evidence>
<dbReference type="EC" id="5.3.99.3" evidence="7 10"/>
<dbReference type="EMBL" id="AB046026">
    <property type="protein sequence ID" value="BAB01608.1"/>
    <property type="molecule type" value="mRNA"/>
</dbReference>
<dbReference type="EMBL" id="AB169647">
    <property type="protein sequence ID" value="BAE01728.1"/>
    <property type="molecule type" value="mRNA"/>
</dbReference>
<dbReference type="EMBL" id="AY805118">
    <property type="protein sequence ID" value="AAW83056.1"/>
    <property type="molecule type" value="mRNA"/>
</dbReference>
<dbReference type="PDB" id="1Z9H">
    <property type="method" value="X-ray"/>
    <property type="resolution" value="2.60 A"/>
    <property type="chains" value="A/B/C/D=88-377"/>
</dbReference>
<dbReference type="PDB" id="2PBJ">
    <property type="method" value="X-ray"/>
    <property type="resolution" value="2.80 A"/>
    <property type="chains" value="A/B/C/D=88-377"/>
</dbReference>
<dbReference type="PDBsum" id="1Z9H"/>
<dbReference type="PDBsum" id="2PBJ"/>
<dbReference type="SMR" id="Q9N0A4"/>
<dbReference type="STRING" id="9541.ENSMFAP00000006235"/>
<dbReference type="eggNOG" id="KOG3029">
    <property type="taxonomic scope" value="Eukaryota"/>
</dbReference>
<dbReference type="BRENDA" id="5.3.99.3">
    <property type="organism ID" value="1793"/>
</dbReference>
<dbReference type="SABIO-RK" id="Q9N0A4"/>
<dbReference type="UniPathway" id="UPA00662"/>
<dbReference type="EvolutionaryTrace" id="Q9N0A4"/>
<dbReference type="Proteomes" id="UP000233100">
    <property type="component" value="Unplaced"/>
</dbReference>
<dbReference type="GO" id="GO:0000139">
    <property type="term" value="C:Golgi membrane"/>
    <property type="evidence" value="ECO:0000250"/>
    <property type="project" value="UniProtKB"/>
</dbReference>
<dbReference type="GO" id="GO:0005739">
    <property type="term" value="C:mitochondrion"/>
    <property type="evidence" value="ECO:0007669"/>
    <property type="project" value="TreeGrafter"/>
</dbReference>
<dbReference type="GO" id="GO:0048471">
    <property type="term" value="C:perinuclear region of cytoplasm"/>
    <property type="evidence" value="ECO:0007669"/>
    <property type="project" value="UniProtKB-SubCell"/>
</dbReference>
<dbReference type="GO" id="GO:0036134">
    <property type="term" value="F:12-hydroxyheptadecatrienoic acid synthase activity"/>
    <property type="evidence" value="ECO:0007669"/>
    <property type="project" value="RHEA"/>
</dbReference>
<dbReference type="GO" id="GO:0043295">
    <property type="term" value="F:glutathione binding"/>
    <property type="evidence" value="ECO:0000314"/>
    <property type="project" value="UniProtKB"/>
</dbReference>
<dbReference type="GO" id="GO:0020037">
    <property type="term" value="F:heme binding"/>
    <property type="evidence" value="ECO:0000314"/>
    <property type="project" value="UniProtKB"/>
</dbReference>
<dbReference type="GO" id="GO:0042802">
    <property type="term" value="F:identical protein binding"/>
    <property type="evidence" value="ECO:0000314"/>
    <property type="project" value="UniProtKB"/>
</dbReference>
<dbReference type="GO" id="GO:0016829">
    <property type="term" value="F:lyase activity"/>
    <property type="evidence" value="ECO:0000314"/>
    <property type="project" value="UniProtKB"/>
</dbReference>
<dbReference type="GO" id="GO:0050220">
    <property type="term" value="F:prostaglandin-E synthase activity"/>
    <property type="evidence" value="ECO:0000314"/>
    <property type="project" value="UniProtKB"/>
</dbReference>
<dbReference type="GO" id="GO:0001516">
    <property type="term" value="P:prostaglandin biosynthetic process"/>
    <property type="evidence" value="ECO:0000314"/>
    <property type="project" value="UniProtKB"/>
</dbReference>
<dbReference type="CDD" id="cd03197">
    <property type="entry name" value="GST_C_mPGES2"/>
    <property type="match status" value="1"/>
</dbReference>
<dbReference type="CDD" id="cd03040">
    <property type="entry name" value="GST_N_mPGES2"/>
    <property type="match status" value="1"/>
</dbReference>
<dbReference type="FunFam" id="1.20.1050.10:FF:000028">
    <property type="entry name" value="Prostaglandin E synthase 2"/>
    <property type="match status" value="1"/>
</dbReference>
<dbReference type="FunFam" id="3.40.30.10:FF:000114">
    <property type="entry name" value="Prostaglandin E synthase 2"/>
    <property type="match status" value="1"/>
</dbReference>
<dbReference type="FunFam" id="6.20.200.30:FF:000001">
    <property type="entry name" value="Prostaglandin E synthase 2"/>
    <property type="match status" value="1"/>
</dbReference>
<dbReference type="Gene3D" id="1.20.1050.10">
    <property type="match status" value="1"/>
</dbReference>
<dbReference type="Gene3D" id="6.20.200.30">
    <property type="match status" value="1"/>
</dbReference>
<dbReference type="Gene3D" id="3.40.30.10">
    <property type="entry name" value="Glutaredoxin"/>
    <property type="match status" value="1"/>
</dbReference>
<dbReference type="InterPro" id="IPR010987">
    <property type="entry name" value="Glutathione-S-Trfase_C-like"/>
</dbReference>
<dbReference type="InterPro" id="IPR036282">
    <property type="entry name" value="Glutathione-S-Trfase_C_sf"/>
</dbReference>
<dbReference type="InterPro" id="IPR004045">
    <property type="entry name" value="Glutathione_S-Trfase_N"/>
</dbReference>
<dbReference type="InterPro" id="IPR034334">
    <property type="entry name" value="PGES2"/>
</dbReference>
<dbReference type="InterPro" id="IPR034335">
    <property type="entry name" value="PGES2_C"/>
</dbReference>
<dbReference type="InterPro" id="IPR036249">
    <property type="entry name" value="Thioredoxin-like_sf"/>
</dbReference>
<dbReference type="PANTHER" id="PTHR12782">
    <property type="entry name" value="MICROSOMAL PROSTAGLANDIN E SYNTHASE-2"/>
    <property type="match status" value="1"/>
</dbReference>
<dbReference type="PANTHER" id="PTHR12782:SF5">
    <property type="entry name" value="PROSTAGLANDIN E SYNTHASE 2"/>
    <property type="match status" value="1"/>
</dbReference>
<dbReference type="Pfam" id="PF13417">
    <property type="entry name" value="GST_N_3"/>
    <property type="match status" value="1"/>
</dbReference>
<dbReference type="SFLD" id="SFLDG01182">
    <property type="entry name" value="Prostaglandin_E_synthase_like"/>
    <property type="match status" value="1"/>
</dbReference>
<dbReference type="SFLD" id="SFLDG01203">
    <property type="entry name" value="Prostaglandin_E_synthase_like1"/>
    <property type="match status" value="1"/>
</dbReference>
<dbReference type="SUPFAM" id="SSF47616">
    <property type="entry name" value="GST C-terminal domain-like"/>
    <property type="match status" value="1"/>
</dbReference>
<dbReference type="SUPFAM" id="SSF52833">
    <property type="entry name" value="Thioredoxin-like"/>
    <property type="match status" value="1"/>
</dbReference>
<dbReference type="PROSITE" id="PS00195">
    <property type="entry name" value="GLUTAREDOXIN_1"/>
    <property type="match status" value="1"/>
</dbReference>
<dbReference type="PROSITE" id="PS51354">
    <property type="entry name" value="GLUTAREDOXIN_2"/>
    <property type="match status" value="1"/>
</dbReference>
<dbReference type="PROSITE" id="PS50405">
    <property type="entry name" value="GST_CTER"/>
    <property type="match status" value="1"/>
</dbReference>
<keyword id="KW-0002">3D-structure</keyword>
<keyword id="KW-0963">Cytoplasm</keyword>
<keyword id="KW-0275">Fatty acid biosynthesis</keyword>
<keyword id="KW-0276">Fatty acid metabolism</keyword>
<keyword id="KW-0333">Golgi apparatus</keyword>
<keyword id="KW-0413">Isomerase</keyword>
<keyword id="KW-0444">Lipid biosynthesis</keyword>
<keyword id="KW-0443">Lipid metabolism</keyword>
<keyword id="KW-0472">Membrane</keyword>
<keyword id="KW-0597">Phosphoprotein</keyword>
<keyword id="KW-0643">Prostaglandin biosynthesis</keyword>
<keyword id="KW-0644">Prostaglandin metabolism</keyword>
<keyword id="KW-1185">Reference proteome</keyword>
<keyword id="KW-0812">Transmembrane</keyword>
<keyword id="KW-1133">Transmembrane helix</keyword>
<name>PGES2_MACFA</name>
<reference key="1">
    <citation type="journal article" date="2002" name="Biochem. Biophys. Res. Commun.">
        <title>Identification and characterization of a novel type of membrane-associated prostaglandin E synthase.</title>
        <authorList>
            <person name="Tanikawa N."/>
            <person name="Ohmiya Y."/>
            <person name="Ohkubo H."/>
            <person name="Hashimoto K."/>
            <person name="Kangawa K."/>
            <person name="Kojima M."/>
            <person name="Ito S."/>
            <person name="Watanabe K."/>
        </authorList>
    </citation>
    <scope>NUCLEOTIDE SEQUENCE [MRNA]</scope>
    <scope>CATALYTIC ACTIVITY</scope>
    <scope>FUNCTION</scope>
    <scope>BIOPHYSICOCHEMICAL PROPERTIES</scope>
    <scope>ACTIVITY REGULATION</scope>
</reference>
<reference key="2">
    <citation type="submission" date="2005-06" db="EMBL/GenBank/DDBJ databases">
        <title>DNA sequences of macaque genes expressed in brain or testis and its evolutionary implications.</title>
        <authorList>
            <consortium name="International consortium for macaque cDNA sequencing and analysis"/>
        </authorList>
    </citation>
    <scope>NUCLEOTIDE SEQUENCE [LARGE SCALE MRNA]</scope>
    <source>
        <tissue>Brain cortex</tissue>
    </source>
</reference>
<reference key="3">
    <citation type="journal article" date="2005" name="Hum. Reprod.">
        <title>Microsomal prostaglandin E synthase-1 (mPGES-1) is the primary form of PGES expressed by the primate periovulatory follicle.</title>
        <authorList>
            <person name="Duffy D.M."/>
            <person name="Seachord C.L."/>
            <person name="Dozier B.L."/>
        </authorList>
    </citation>
    <scope>NUCLEOTIDE SEQUENCE [MRNA] OF 163-247</scope>
</reference>
<reference key="4">
    <citation type="journal article" date="2005" name="J. Mol. Biol.">
        <title>Crystal structure and possible catalytic mechanism of microsomal prostaglandin E synthase type 2 (mPGES-2).</title>
        <authorList>
            <person name="Yamada T."/>
            <person name="Komoto J."/>
            <person name="Watanabe K."/>
            <person name="Ohmiya Y."/>
            <person name="Takusagawa F."/>
        </authorList>
    </citation>
    <scope>X-RAY CRYSTALLOGRAPHY (2.6 ANGSTROMS) OF 88-377 IN COMPLEX WITH INDOMETHACIN</scope>
    <scope>SUBUNIT</scope>
</reference>
<reference key="5">
    <citation type="journal article" date="2007" name="Biochemistry">
        <title>PGH2 degradation pathway catalyzed by GSH-heme complex bound microsomal prostaglandin E2 synthase type 2: the first example of a dual-function enzyme.</title>
        <authorList>
            <person name="Yamada T."/>
            <person name="Takusagawa F."/>
        </authorList>
    </citation>
    <scope>X-RAY CRYSTALLOGRAPHY (2.8 ANGSTROMS) OF 88-377 IN COMPLEX WITH HEME AND GLUTATHIONE</scope>
</reference>
<reference key="6">
    <citation type="journal article" date="2013" name="J. Biol. Chem.">
        <title>Microsomal prostaglandin E synthase type 2 (mPGES2) is a glutathione-dependent heme protein, and dithiothreitol dissociates the bound heme to produce active prostaglandin E2 synthase in vitro.</title>
        <authorList>
            <person name="Takusagawa F."/>
        </authorList>
    </citation>
    <scope>FUNCTION</scope>
    <scope>HEME-BINDING</scope>
    <scope>CATALYTIC ACTIVITY</scope>
    <scope>CAUTION</scope>
</reference>
<sequence>MAPATRVVRALWTGGCALAWRLGGRPQPLLPTQSRAGFAGAAGGQGPVAAARKGSPRLLGAAALALGGALGLYHTARWHLHAQDLHAERSAVQLSLSSRLQLTLYQYKTCPFCSKVRAFLDFHALPYQVVEVNPVLRAEIKFSSYRKVPILVAQEGESSQQLNDSSVIISALKTYLVSGQPLEEIITYYPAMKAVNDQGKEVTEFGNKYWLMLNEKEAQQVYSGKEARTEEMKWRQWADDWLVHLISPNVYRTPTEALASFDYIVREGKFGAVEGAVAKYMGAAAMYLISKRLKSRHRLQDNVREDLYEAADKWVAAVGKDRPFMGGQKPNLADLAVYGVLRVMEGLDAFDDLMQHTHIQPWYLRVERAITEASPAH</sequence>
<proteinExistence type="evidence at protein level"/>
<feature type="chain" id="PRO_0000013129" description="Prostaglandin E synthase 2">
    <location>
        <begin position="1"/>
        <end position="377"/>
    </location>
</feature>
<feature type="chain" id="PRO_0000013130" description="Prostaglandin E synthase 2 truncated form" evidence="1">
    <location>
        <begin position="88"/>
        <end position="377"/>
    </location>
</feature>
<feature type="topological domain" description="Lumenal" evidence="5">
    <location>
        <begin position="1"/>
        <end position="57"/>
    </location>
</feature>
<feature type="transmembrane region" description="Helical" evidence="5">
    <location>
        <begin position="58"/>
        <end position="74"/>
    </location>
</feature>
<feature type="topological domain" description="Cytoplasmic" evidence="5">
    <location>
        <begin position="75"/>
        <end position="377"/>
    </location>
</feature>
<feature type="domain" description="Glutaredoxin" evidence="6">
    <location>
        <begin position="90"/>
        <end position="193"/>
    </location>
</feature>
<feature type="domain" description="GST C-terminal">
    <location>
        <begin position="263"/>
        <end position="377"/>
    </location>
</feature>
<feature type="binding site" evidence="9">
    <location>
        <position position="148"/>
    </location>
    <ligand>
        <name>glutathione</name>
        <dbReference type="ChEBI" id="CHEBI:57925"/>
    </ligand>
</feature>
<feature type="binding site" evidence="9">
    <location>
        <begin position="164"/>
        <end position="165"/>
    </location>
    <ligand>
        <name>glutathione</name>
        <dbReference type="ChEBI" id="CHEBI:57925"/>
    </ligand>
</feature>
<feature type="site" description="Cleavage" evidence="2">
    <location>
        <begin position="87"/>
        <end position="88"/>
    </location>
</feature>
<feature type="modified residue" description="Phosphoserine" evidence="4">
    <location>
        <position position="95"/>
    </location>
</feature>
<feature type="strand" evidence="13">
    <location>
        <begin position="101"/>
        <end position="106"/>
    </location>
</feature>
<feature type="helix" evidence="13">
    <location>
        <begin position="111"/>
        <end position="122"/>
    </location>
</feature>
<feature type="strand" evidence="13">
    <location>
        <begin position="127"/>
        <end position="131"/>
    </location>
</feature>
<feature type="turn" evidence="13">
    <location>
        <begin position="134"/>
        <end position="136"/>
    </location>
</feature>
<feature type="helix" evidence="13">
    <location>
        <begin position="138"/>
        <end position="140"/>
    </location>
</feature>
<feature type="strand" evidence="13">
    <location>
        <begin position="150"/>
        <end position="155"/>
    </location>
</feature>
<feature type="strand" evidence="13">
    <location>
        <begin position="158"/>
        <end position="162"/>
    </location>
</feature>
<feature type="helix" evidence="13">
    <location>
        <begin position="165"/>
        <end position="178"/>
    </location>
</feature>
<feature type="helix" evidence="13">
    <location>
        <begin position="182"/>
        <end position="185"/>
    </location>
</feature>
<feature type="helix" evidence="13">
    <location>
        <begin position="186"/>
        <end position="188"/>
    </location>
</feature>
<feature type="strand" evidence="13">
    <location>
        <begin position="191"/>
        <end position="195"/>
    </location>
</feature>
<feature type="strand" evidence="13">
    <location>
        <begin position="201"/>
        <end position="205"/>
    </location>
</feature>
<feature type="turn" evidence="13">
    <location>
        <begin position="206"/>
        <end position="209"/>
    </location>
</feature>
<feature type="helix" evidence="13">
    <location>
        <begin position="215"/>
        <end position="221"/>
    </location>
</feature>
<feature type="helix" evidence="13">
    <location>
        <begin position="225"/>
        <end position="240"/>
    </location>
</feature>
<feature type="helix" evidence="13">
    <location>
        <begin position="243"/>
        <end position="245"/>
    </location>
</feature>
<feature type="helix" evidence="13">
    <location>
        <begin position="246"/>
        <end position="250"/>
    </location>
</feature>
<feature type="strand" evidence="13">
    <location>
        <begin position="251"/>
        <end position="253"/>
    </location>
</feature>
<feature type="helix" evidence="13">
    <location>
        <begin position="254"/>
        <end position="267"/>
    </location>
</feature>
<feature type="helix" evidence="13">
    <location>
        <begin position="272"/>
        <end position="296"/>
    </location>
</feature>
<feature type="helix" evidence="13">
    <location>
        <begin position="303"/>
        <end position="318"/>
    </location>
</feature>
<feature type="helix" evidence="13">
    <location>
        <begin position="332"/>
        <end position="342"/>
    </location>
</feature>
<feature type="turn" evidence="13">
    <location>
        <begin position="343"/>
        <end position="346"/>
    </location>
</feature>
<feature type="helix" evidence="13">
    <location>
        <begin position="348"/>
        <end position="357"/>
    </location>
</feature>
<feature type="helix" evidence="13">
    <location>
        <begin position="360"/>
        <end position="371"/>
    </location>
</feature>
<protein>
    <recommendedName>
        <fullName>Prostaglandin E synthase 2</fullName>
        <ecNumber evidence="7 10">5.3.99.3</ecNumber>
    </recommendedName>
    <alternativeName>
        <fullName>Microsomal prostaglandin E synthase 2</fullName>
        <shortName>mPGES-2</shortName>
    </alternativeName>
    <component>
        <recommendedName>
            <fullName>Prostaglandin E synthase 2 truncated form</fullName>
        </recommendedName>
    </component>
</protein>